<feature type="chain" id="PRO_0000207903" description="Protein PsbN">
    <location>
        <begin position="1"/>
        <end position="43"/>
    </location>
</feature>
<feature type="transmembrane region" description="Helical" evidence="1">
    <location>
        <begin position="7"/>
        <end position="27"/>
    </location>
</feature>
<keyword id="KW-0150">Chloroplast</keyword>
<keyword id="KW-0472">Membrane</keyword>
<keyword id="KW-0934">Plastid</keyword>
<keyword id="KW-0793">Thylakoid</keyword>
<keyword id="KW-0812">Transmembrane</keyword>
<keyword id="KW-1133">Transmembrane helix</keyword>
<organism>
    <name type="scientific">Guillardia theta</name>
    <name type="common">Cryptophyte</name>
    <name type="synonym">Cryptomonas phi</name>
    <dbReference type="NCBI Taxonomy" id="55529"/>
    <lineage>
        <taxon>Eukaryota</taxon>
        <taxon>Cryptophyceae</taxon>
        <taxon>Pyrenomonadales</taxon>
        <taxon>Geminigeraceae</taxon>
        <taxon>Guillardia</taxon>
    </lineage>
</organism>
<gene>
    <name evidence="1" type="primary">psbN</name>
</gene>
<reference key="1">
    <citation type="journal article" date="1999" name="J. Mol. Evol.">
        <title>The plastid genome of the cryptophyte alga, Guillardia theta: complete sequence and conserved synteny groups confirm its common ancestry with red algae.</title>
        <authorList>
            <person name="Douglas S.E."/>
            <person name="Penny S.L."/>
        </authorList>
    </citation>
    <scope>NUCLEOTIDE SEQUENCE [LARGE SCALE GENOMIC DNA]</scope>
</reference>
<comment type="function">
    <text evidence="1">May play a role in photosystem I and II biogenesis.</text>
</comment>
<comment type="subcellular location">
    <subcellularLocation>
        <location evidence="1">Plastid</location>
        <location evidence="1">Chloroplast thylakoid membrane</location>
        <topology evidence="1">Single-pass membrane protein</topology>
    </subcellularLocation>
</comment>
<comment type="similarity">
    <text evidence="1">Belongs to the PsbN family.</text>
</comment>
<comment type="caution">
    <text evidence="1">Originally thought to be a component of PSII; based on experiments in Synechocystis, N.tabacum and barley, and its absence from PSII in T.elongatus and T.vulcanus, this is probably not true.</text>
</comment>
<dbReference type="EMBL" id="AF041468">
    <property type="protein sequence ID" value="AAC35735.1"/>
    <property type="molecule type" value="Genomic_DNA"/>
</dbReference>
<dbReference type="RefSeq" id="NP_050801.1">
    <property type="nucleotide sequence ID" value="NC_000926.1"/>
</dbReference>
<dbReference type="SMR" id="O78513"/>
<dbReference type="GeneID" id="857109"/>
<dbReference type="HOGENOM" id="CLU_205504_0_0_1"/>
<dbReference type="GO" id="GO:0009535">
    <property type="term" value="C:chloroplast thylakoid membrane"/>
    <property type="evidence" value="ECO:0007669"/>
    <property type="project" value="UniProtKB-SubCell"/>
</dbReference>
<dbReference type="GO" id="GO:0015979">
    <property type="term" value="P:photosynthesis"/>
    <property type="evidence" value="ECO:0007669"/>
    <property type="project" value="InterPro"/>
</dbReference>
<dbReference type="HAMAP" id="MF_00293">
    <property type="entry name" value="PSII_PsbN"/>
    <property type="match status" value="1"/>
</dbReference>
<dbReference type="InterPro" id="IPR003398">
    <property type="entry name" value="PSII_PsbN"/>
</dbReference>
<dbReference type="NCBIfam" id="NF009650">
    <property type="entry name" value="PRK13183.1"/>
    <property type="match status" value="1"/>
</dbReference>
<dbReference type="PANTHER" id="PTHR35326">
    <property type="entry name" value="PROTEIN PSBN"/>
    <property type="match status" value="1"/>
</dbReference>
<dbReference type="PANTHER" id="PTHR35326:SF3">
    <property type="entry name" value="PROTEIN PSBN"/>
    <property type="match status" value="1"/>
</dbReference>
<dbReference type="Pfam" id="PF02468">
    <property type="entry name" value="PsbN"/>
    <property type="match status" value="1"/>
</dbReference>
<accession>O78513</accession>
<geneLocation type="chloroplast"/>
<sequence>METATVLIIFIASLLLGLTGYSIYTAFGPNSKELRDPFDDHED</sequence>
<proteinExistence type="inferred from homology"/>
<evidence type="ECO:0000255" key="1">
    <source>
        <dbReference type="HAMAP-Rule" id="MF_00293"/>
    </source>
</evidence>
<name>PSBN_GUITH</name>
<protein>
    <recommendedName>
        <fullName evidence="1">Protein PsbN</fullName>
    </recommendedName>
</protein>